<gene>
    <name evidence="1" type="primary">PSPH</name>
</gene>
<feature type="chain" id="PRO_0000244407" description="Phosphoserine phosphatase">
    <location>
        <begin position="1"/>
        <end position="225"/>
    </location>
</feature>
<feature type="active site" description="Nucleophile" evidence="1">
    <location>
        <position position="20"/>
    </location>
</feature>
<feature type="active site" description="Proton donor" evidence="1">
    <location>
        <position position="22"/>
    </location>
</feature>
<feature type="binding site" evidence="1">
    <location>
        <begin position="20"/>
        <end position="22"/>
    </location>
    <ligand>
        <name>L-serine</name>
        <dbReference type="ChEBI" id="CHEBI:33384"/>
    </ligand>
</feature>
<feature type="binding site" evidence="1">
    <location>
        <position position="20"/>
    </location>
    <ligand>
        <name>Mg(2+)</name>
        <dbReference type="ChEBI" id="CHEBI:18420"/>
    </ligand>
</feature>
<feature type="binding site" evidence="1">
    <location>
        <position position="22"/>
    </location>
    <ligand>
        <name>Mg(2+)</name>
        <dbReference type="ChEBI" id="CHEBI:18420"/>
    </ligand>
</feature>
<feature type="binding site" evidence="1">
    <location>
        <position position="52"/>
    </location>
    <ligand>
        <name>O-phospho-L-serine</name>
        <dbReference type="ChEBI" id="CHEBI:57524"/>
    </ligand>
</feature>
<feature type="binding site" evidence="1">
    <location>
        <position position="53"/>
    </location>
    <ligand>
        <name>phosphate</name>
        <dbReference type="ChEBI" id="CHEBI:43474"/>
    </ligand>
</feature>
<feature type="binding site" evidence="1">
    <location>
        <begin position="109"/>
        <end position="111"/>
    </location>
    <ligand>
        <name>L-serine</name>
        <dbReference type="ChEBI" id="CHEBI:33384"/>
    </ligand>
</feature>
<feature type="binding site" evidence="1">
    <location>
        <begin position="109"/>
        <end position="111"/>
    </location>
    <ligand>
        <name>O-phospho-L-serine</name>
        <dbReference type="ChEBI" id="CHEBI:57524"/>
    </ligand>
</feature>
<feature type="binding site" evidence="1">
    <location>
        <position position="158"/>
    </location>
    <ligand>
        <name>L-serine</name>
        <dbReference type="ChEBI" id="CHEBI:33384"/>
    </ligand>
</feature>
<feature type="binding site" evidence="1">
    <location>
        <position position="158"/>
    </location>
    <ligand>
        <name>O-phospho-L-serine</name>
        <dbReference type="ChEBI" id="CHEBI:57524"/>
    </ligand>
</feature>
<feature type="binding site" evidence="1">
    <location>
        <position position="179"/>
    </location>
    <ligand>
        <name>Mg(2+)</name>
        <dbReference type="ChEBI" id="CHEBI:18420"/>
    </ligand>
</feature>
<feature type="binding site" evidence="1">
    <location>
        <position position="182"/>
    </location>
    <ligand>
        <name>O-phospho-L-serine</name>
        <dbReference type="ChEBI" id="CHEBI:57524"/>
    </ligand>
</feature>
<feature type="binding site" evidence="1">
    <location>
        <position position="182"/>
    </location>
    <ligand>
        <name>phosphate</name>
        <dbReference type="ChEBI" id="CHEBI:43474"/>
    </ligand>
</feature>
<feature type="modified residue" description="N-acetylmethionine" evidence="1">
    <location>
        <position position="1"/>
    </location>
</feature>
<dbReference type="EC" id="3.1.3.3" evidence="1"/>
<dbReference type="EMBL" id="BC112884">
    <property type="protein sequence ID" value="AAI12885.1"/>
    <property type="molecule type" value="mRNA"/>
</dbReference>
<dbReference type="RefSeq" id="NP_001039820.1">
    <property type="nucleotide sequence ID" value="NM_001046355.2"/>
</dbReference>
<dbReference type="RefSeq" id="XP_005224980.1">
    <property type="nucleotide sequence ID" value="XM_005224923.5"/>
</dbReference>
<dbReference type="RefSeq" id="XP_005224981.1">
    <property type="nucleotide sequence ID" value="XM_005224924.3"/>
</dbReference>
<dbReference type="RefSeq" id="XP_005224982.1">
    <property type="nucleotide sequence ID" value="XM_005224925.5"/>
</dbReference>
<dbReference type="RefSeq" id="XP_010817735.1">
    <property type="nucleotide sequence ID" value="XM_010819433.2"/>
</dbReference>
<dbReference type="RefSeq" id="XP_024840753.1">
    <property type="nucleotide sequence ID" value="XM_024984985.2"/>
</dbReference>
<dbReference type="RefSeq" id="XP_059737364.1">
    <property type="nucleotide sequence ID" value="XM_059881381.1"/>
</dbReference>
<dbReference type="SMR" id="Q2KHU0"/>
<dbReference type="FunCoup" id="Q2KHU0">
    <property type="interactions" value="1573"/>
</dbReference>
<dbReference type="STRING" id="9913.ENSBTAP00000017392"/>
<dbReference type="PaxDb" id="9913-ENSBTAP00000017392"/>
<dbReference type="GeneID" id="533630"/>
<dbReference type="KEGG" id="bta:533630"/>
<dbReference type="CTD" id="5723"/>
<dbReference type="VEuPathDB" id="HostDB:ENSBTAG00000013081"/>
<dbReference type="eggNOG" id="KOG1615">
    <property type="taxonomic scope" value="Eukaryota"/>
</dbReference>
<dbReference type="HOGENOM" id="CLU_036368_2_1_1"/>
<dbReference type="InParanoid" id="Q2KHU0"/>
<dbReference type="OMA" id="ANYFIGF"/>
<dbReference type="OrthoDB" id="27226at2759"/>
<dbReference type="TreeFam" id="TF315024"/>
<dbReference type="Reactome" id="R-BTA-977347">
    <property type="pathway name" value="Serine biosynthesis"/>
</dbReference>
<dbReference type="UniPathway" id="UPA00135">
    <property type="reaction ID" value="UER00198"/>
</dbReference>
<dbReference type="Proteomes" id="UP000009136">
    <property type="component" value="Chromosome 25"/>
</dbReference>
<dbReference type="Bgee" id="ENSBTAG00000013081">
    <property type="expression patterns" value="Expressed in oocyte and 105 other cell types or tissues"/>
</dbReference>
<dbReference type="GO" id="GO:0005737">
    <property type="term" value="C:cytoplasm"/>
    <property type="evidence" value="ECO:0000318"/>
    <property type="project" value="GO_Central"/>
</dbReference>
<dbReference type="GO" id="GO:0005829">
    <property type="term" value="C:cytosol"/>
    <property type="evidence" value="ECO:0007669"/>
    <property type="project" value="UniProtKB-SubCell"/>
</dbReference>
<dbReference type="GO" id="GO:0036424">
    <property type="term" value="F:L-phosphoserine phosphatase activity"/>
    <property type="evidence" value="ECO:0000250"/>
    <property type="project" value="UniProtKB"/>
</dbReference>
<dbReference type="GO" id="GO:0000287">
    <property type="term" value="F:magnesium ion binding"/>
    <property type="evidence" value="ECO:0000250"/>
    <property type="project" value="UniProtKB"/>
</dbReference>
<dbReference type="GO" id="GO:0006564">
    <property type="term" value="P:L-serine biosynthetic process"/>
    <property type="evidence" value="ECO:0000250"/>
    <property type="project" value="UniProtKB"/>
</dbReference>
<dbReference type="GO" id="GO:0006563">
    <property type="term" value="P:L-serine metabolic process"/>
    <property type="evidence" value="ECO:0000250"/>
    <property type="project" value="UniProtKB"/>
</dbReference>
<dbReference type="CDD" id="cd04309">
    <property type="entry name" value="HAD_PSP_eu"/>
    <property type="match status" value="1"/>
</dbReference>
<dbReference type="FunFam" id="3.40.50.1000:FF:000077">
    <property type="entry name" value="Phosphoserine phosphatase, chloroplastic"/>
    <property type="match status" value="1"/>
</dbReference>
<dbReference type="FunFam" id="3.40.50.1000:FF:000114">
    <property type="entry name" value="Phosphoserine phosphatase, chloroplastic"/>
    <property type="match status" value="1"/>
</dbReference>
<dbReference type="Gene3D" id="3.40.50.1000">
    <property type="entry name" value="HAD superfamily/HAD-like"/>
    <property type="match status" value="2"/>
</dbReference>
<dbReference type="InterPro" id="IPR050582">
    <property type="entry name" value="HAD-like_SerB"/>
</dbReference>
<dbReference type="InterPro" id="IPR036412">
    <property type="entry name" value="HAD-like_sf"/>
</dbReference>
<dbReference type="InterPro" id="IPR023214">
    <property type="entry name" value="HAD_sf"/>
</dbReference>
<dbReference type="InterPro" id="IPR004469">
    <property type="entry name" value="PSP"/>
</dbReference>
<dbReference type="NCBIfam" id="TIGR01488">
    <property type="entry name" value="HAD-SF-IB"/>
    <property type="match status" value="1"/>
</dbReference>
<dbReference type="NCBIfam" id="TIGR00338">
    <property type="entry name" value="serB"/>
    <property type="match status" value="1"/>
</dbReference>
<dbReference type="PANTHER" id="PTHR43344">
    <property type="entry name" value="PHOSPHOSERINE PHOSPHATASE"/>
    <property type="match status" value="1"/>
</dbReference>
<dbReference type="PANTHER" id="PTHR43344:SF2">
    <property type="entry name" value="PHOSPHOSERINE PHOSPHATASE"/>
    <property type="match status" value="1"/>
</dbReference>
<dbReference type="Pfam" id="PF00702">
    <property type="entry name" value="Hydrolase"/>
    <property type="match status" value="1"/>
</dbReference>
<dbReference type="SFLD" id="SFLDG01137">
    <property type="entry name" value="C1.6.1:_Phosphoserine_Phosphat"/>
    <property type="match status" value="1"/>
</dbReference>
<dbReference type="SFLD" id="SFLDG01136">
    <property type="entry name" value="C1.6:_Phosphoserine_Phosphatas"/>
    <property type="match status" value="1"/>
</dbReference>
<dbReference type="SUPFAM" id="SSF56784">
    <property type="entry name" value="HAD-like"/>
    <property type="match status" value="1"/>
</dbReference>
<name>SERB_BOVIN</name>
<proteinExistence type="evidence at transcript level"/>
<protein>
    <recommendedName>
        <fullName evidence="1">Phosphoserine phosphatase</fullName>
        <shortName evidence="1">PSP</shortName>
        <shortName evidence="1">PSPase</shortName>
        <ecNumber evidence="1">3.1.3.3</ecNumber>
    </recommendedName>
    <alternativeName>
        <fullName evidence="1">O-phosphoserine phosphohydrolase</fullName>
    </alternativeName>
</protein>
<keyword id="KW-0007">Acetylation</keyword>
<keyword id="KW-0028">Amino-acid biosynthesis</keyword>
<keyword id="KW-0963">Cytoplasm</keyword>
<keyword id="KW-0378">Hydrolase</keyword>
<keyword id="KW-0460">Magnesium</keyword>
<keyword id="KW-0479">Metal-binding</keyword>
<keyword id="KW-1185">Reference proteome</keyword>
<keyword id="KW-0718">Serine biosynthesis</keyword>
<evidence type="ECO:0000250" key="1">
    <source>
        <dbReference type="UniProtKB" id="P78330"/>
    </source>
</evidence>
<evidence type="ECO:0000305" key="2"/>
<comment type="function">
    <text evidence="1">Catalyzes the last irreversible step in the biosynthesis of L-serine from carbohydrates, the dephosphorylation of O-phospho-L-serine to L-serine. L-serine can then be used in protein synthesis, to produce other amino acids, in nucleotide metabolism or in glutathione synthesis, or can be racemized to D-serine, a neuromodulator. May also act on O-phospho-D-serine.</text>
</comment>
<comment type="catalytic activity">
    <reaction evidence="1">
        <text>O-phospho-L-serine + H2O = L-serine + phosphate</text>
        <dbReference type="Rhea" id="RHEA:21208"/>
        <dbReference type="ChEBI" id="CHEBI:15377"/>
        <dbReference type="ChEBI" id="CHEBI:33384"/>
        <dbReference type="ChEBI" id="CHEBI:43474"/>
        <dbReference type="ChEBI" id="CHEBI:57524"/>
        <dbReference type="EC" id="3.1.3.3"/>
    </reaction>
    <physiologicalReaction direction="left-to-right" evidence="1">
        <dbReference type="Rhea" id="RHEA:21209"/>
    </physiologicalReaction>
</comment>
<comment type="catalytic activity">
    <reaction evidence="1">
        <text>O-phospho-D-serine + H2O = D-serine + phosphate</text>
        <dbReference type="Rhea" id="RHEA:24873"/>
        <dbReference type="ChEBI" id="CHEBI:15377"/>
        <dbReference type="ChEBI" id="CHEBI:35247"/>
        <dbReference type="ChEBI" id="CHEBI:43474"/>
        <dbReference type="ChEBI" id="CHEBI:58680"/>
        <dbReference type="EC" id="3.1.3.3"/>
    </reaction>
    <physiologicalReaction direction="left-to-right" evidence="1">
        <dbReference type="Rhea" id="RHEA:24874"/>
    </physiologicalReaction>
</comment>
<comment type="cofactor">
    <cofactor evidence="1">
        <name>Mg(2+)</name>
        <dbReference type="ChEBI" id="CHEBI:18420"/>
    </cofactor>
    <text evidence="1">Binds 1 Mg(2+) ion per subunit.</text>
</comment>
<comment type="pathway">
    <text evidence="1">Amino-acid biosynthesis; L-serine biosynthesis; L-serine from 3-phospho-D-glycerate: step 3/3.</text>
</comment>
<comment type="subunit">
    <text evidence="1">Homodimer.</text>
</comment>
<comment type="subcellular location">
    <subcellularLocation>
        <location evidence="1">Cytoplasm</location>
        <location evidence="1">Cytosol</location>
    </subcellularLocation>
</comment>
<comment type="similarity">
    <text evidence="2">Belongs to the HAD-like hydrolase superfamily. SerB family.</text>
</comment>
<organism>
    <name type="scientific">Bos taurus</name>
    <name type="common">Bovine</name>
    <dbReference type="NCBI Taxonomy" id="9913"/>
    <lineage>
        <taxon>Eukaryota</taxon>
        <taxon>Metazoa</taxon>
        <taxon>Chordata</taxon>
        <taxon>Craniata</taxon>
        <taxon>Vertebrata</taxon>
        <taxon>Euteleostomi</taxon>
        <taxon>Mammalia</taxon>
        <taxon>Eutheria</taxon>
        <taxon>Laurasiatheria</taxon>
        <taxon>Artiodactyla</taxon>
        <taxon>Ruminantia</taxon>
        <taxon>Pecora</taxon>
        <taxon>Bovidae</taxon>
        <taxon>Bovinae</taxon>
        <taxon>Bos</taxon>
    </lineage>
</organism>
<sequence>MVSHSELRNLFCSADAVCFDVDSTVIQEEGIDELAKFCGVEDAVSEMTRQAMGGAVPFKAALTQRLALIQPSREQVQRLLAEHPPHLTPGIRELVSRLQERNVQVFLISGGFRSIVEHVASKLNIPSTNVFANRLKFYFNGEYAGFDETQPTAESGGKGKVIKLLKEKFHFKKIVMVGDGATDMEACPPADAFIGFGGNVIRQQVKDNAEWYITDFVELLGALEE</sequence>
<accession>Q2KHU0</accession>
<reference key="1">
    <citation type="submission" date="2006-01" db="EMBL/GenBank/DDBJ databases">
        <authorList>
            <consortium name="NIH - Mammalian Gene Collection (MGC) project"/>
        </authorList>
    </citation>
    <scope>NUCLEOTIDE SEQUENCE [LARGE SCALE MRNA]</scope>
    <source>
        <strain>Hereford</strain>
        <tissue>Thymus</tissue>
    </source>
</reference>